<feature type="chain" id="PRO_0000131505" description="Small ribosomal subunit protein uS5">
    <location>
        <begin position="1"/>
        <end position="211"/>
    </location>
</feature>
<feature type="domain" description="S5 DRBM" evidence="1">
    <location>
        <begin position="44"/>
        <end position="107"/>
    </location>
</feature>
<feature type="region of interest" description="Disordered" evidence="2">
    <location>
        <begin position="1"/>
        <end position="41"/>
    </location>
</feature>
<proteinExistence type="inferred from homology"/>
<dbReference type="EMBL" id="BA000035">
    <property type="protein sequence ID" value="BAC17362.1"/>
    <property type="molecule type" value="Genomic_DNA"/>
</dbReference>
<dbReference type="RefSeq" id="WP_006769774.1">
    <property type="nucleotide sequence ID" value="NZ_GG700687.1"/>
</dbReference>
<dbReference type="SMR" id="Q8FS52"/>
<dbReference type="STRING" id="196164.gene:10740954"/>
<dbReference type="KEGG" id="cef:CE0552"/>
<dbReference type="eggNOG" id="COG0098">
    <property type="taxonomic scope" value="Bacteria"/>
</dbReference>
<dbReference type="HOGENOM" id="CLU_065898_1_0_11"/>
<dbReference type="OrthoDB" id="9809045at2"/>
<dbReference type="Proteomes" id="UP000001409">
    <property type="component" value="Chromosome"/>
</dbReference>
<dbReference type="GO" id="GO:0015935">
    <property type="term" value="C:small ribosomal subunit"/>
    <property type="evidence" value="ECO:0007669"/>
    <property type="project" value="InterPro"/>
</dbReference>
<dbReference type="GO" id="GO:0019843">
    <property type="term" value="F:rRNA binding"/>
    <property type="evidence" value="ECO:0007669"/>
    <property type="project" value="UniProtKB-UniRule"/>
</dbReference>
<dbReference type="GO" id="GO:0003735">
    <property type="term" value="F:structural constituent of ribosome"/>
    <property type="evidence" value="ECO:0007669"/>
    <property type="project" value="InterPro"/>
</dbReference>
<dbReference type="GO" id="GO:0006412">
    <property type="term" value="P:translation"/>
    <property type="evidence" value="ECO:0007669"/>
    <property type="project" value="UniProtKB-UniRule"/>
</dbReference>
<dbReference type="FunFam" id="3.30.160.20:FF:000001">
    <property type="entry name" value="30S ribosomal protein S5"/>
    <property type="match status" value="1"/>
</dbReference>
<dbReference type="FunFam" id="3.30.230.10:FF:000002">
    <property type="entry name" value="30S ribosomal protein S5"/>
    <property type="match status" value="1"/>
</dbReference>
<dbReference type="Gene3D" id="3.30.160.20">
    <property type="match status" value="1"/>
</dbReference>
<dbReference type="Gene3D" id="3.30.230.10">
    <property type="match status" value="1"/>
</dbReference>
<dbReference type="HAMAP" id="MF_01307_B">
    <property type="entry name" value="Ribosomal_uS5_B"/>
    <property type="match status" value="1"/>
</dbReference>
<dbReference type="InterPro" id="IPR020568">
    <property type="entry name" value="Ribosomal_Su5_D2-typ_SF"/>
</dbReference>
<dbReference type="InterPro" id="IPR000851">
    <property type="entry name" value="Ribosomal_uS5"/>
</dbReference>
<dbReference type="InterPro" id="IPR005712">
    <property type="entry name" value="Ribosomal_uS5_bac-type"/>
</dbReference>
<dbReference type="InterPro" id="IPR005324">
    <property type="entry name" value="Ribosomal_uS5_C"/>
</dbReference>
<dbReference type="InterPro" id="IPR013810">
    <property type="entry name" value="Ribosomal_uS5_N"/>
</dbReference>
<dbReference type="InterPro" id="IPR018192">
    <property type="entry name" value="Ribosomal_uS5_N_CS"/>
</dbReference>
<dbReference type="InterPro" id="IPR014721">
    <property type="entry name" value="Ribsml_uS5_D2-typ_fold_subgr"/>
</dbReference>
<dbReference type="NCBIfam" id="TIGR01021">
    <property type="entry name" value="rpsE_bact"/>
    <property type="match status" value="1"/>
</dbReference>
<dbReference type="PANTHER" id="PTHR48277">
    <property type="entry name" value="MITOCHONDRIAL RIBOSOMAL PROTEIN S5"/>
    <property type="match status" value="1"/>
</dbReference>
<dbReference type="PANTHER" id="PTHR48277:SF1">
    <property type="entry name" value="MITOCHONDRIAL RIBOSOMAL PROTEIN S5"/>
    <property type="match status" value="1"/>
</dbReference>
<dbReference type="Pfam" id="PF00333">
    <property type="entry name" value="Ribosomal_S5"/>
    <property type="match status" value="1"/>
</dbReference>
<dbReference type="Pfam" id="PF03719">
    <property type="entry name" value="Ribosomal_S5_C"/>
    <property type="match status" value="1"/>
</dbReference>
<dbReference type="SUPFAM" id="SSF54768">
    <property type="entry name" value="dsRNA-binding domain-like"/>
    <property type="match status" value="1"/>
</dbReference>
<dbReference type="SUPFAM" id="SSF54211">
    <property type="entry name" value="Ribosomal protein S5 domain 2-like"/>
    <property type="match status" value="1"/>
</dbReference>
<dbReference type="PROSITE" id="PS00585">
    <property type="entry name" value="RIBOSOMAL_S5"/>
    <property type="match status" value="1"/>
</dbReference>
<dbReference type="PROSITE" id="PS50881">
    <property type="entry name" value="S5_DSRBD"/>
    <property type="match status" value="1"/>
</dbReference>
<protein>
    <recommendedName>
        <fullName evidence="1">Small ribosomal subunit protein uS5</fullName>
    </recommendedName>
    <alternativeName>
        <fullName evidence="3">30S ribosomal protein S5</fullName>
    </alternativeName>
</protein>
<name>RS5_COREF</name>
<reference key="1">
    <citation type="journal article" date="2003" name="Genome Res.">
        <title>Comparative complete genome sequence analysis of the amino acid replacements responsible for the thermostability of Corynebacterium efficiens.</title>
        <authorList>
            <person name="Nishio Y."/>
            <person name="Nakamura Y."/>
            <person name="Kawarabayasi Y."/>
            <person name="Usuda Y."/>
            <person name="Kimura E."/>
            <person name="Sugimoto S."/>
            <person name="Matsui K."/>
            <person name="Yamagishi A."/>
            <person name="Kikuchi H."/>
            <person name="Ikeo K."/>
            <person name="Gojobori T."/>
        </authorList>
    </citation>
    <scope>NUCLEOTIDE SEQUENCE [LARGE SCALE GENOMIC DNA]</scope>
    <source>
        <strain>DSM 44549 / YS-314 / AJ 12310 / JCM 11189 / NBRC 100395</strain>
    </source>
</reference>
<organism>
    <name type="scientific">Corynebacterium efficiens (strain DSM 44549 / YS-314 / AJ 12310 / JCM 11189 / NBRC 100395)</name>
    <dbReference type="NCBI Taxonomy" id="196164"/>
    <lineage>
        <taxon>Bacteria</taxon>
        <taxon>Bacillati</taxon>
        <taxon>Actinomycetota</taxon>
        <taxon>Actinomycetes</taxon>
        <taxon>Mycobacteriales</taxon>
        <taxon>Corynebacteriaceae</taxon>
        <taxon>Corynebacterium</taxon>
    </lineage>
</organism>
<sequence>MPGRERRDGGRSADENKSNDRNERRGGGRRDDRRNQQQDERSQYIERVVTINRVSKVVKGGRRFSFTALVIVGDGQGMVGVGYGKAKEVPAAIQKGAEEARKNFFRVPMVGGTITHPVQGEAAAGIVMLKPAAPGTGVIAGGAARPVLECAGIQDILSKSLGSDNAINVVHATVDGLKQLVRPEEVAARRGKTVEEVAPARILRARAGQEA</sequence>
<evidence type="ECO:0000255" key="1">
    <source>
        <dbReference type="HAMAP-Rule" id="MF_01307"/>
    </source>
</evidence>
<evidence type="ECO:0000256" key="2">
    <source>
        <dbReference type="SAM" id="MobiDB-lite"/>
    </source>
</evidence>
<evidence type="ECO:0000305" key="3"/>
<gene>
    <name evidence="1" type="primary">rpsE</name>
    <name type="ordered locus">CE0552</name>
</gene>
<accession>Q8FS52</accession>
<keyword id="KW-1185">Reference proteome</keyword>
<keyword id="KW-0687">Ribonucleoprotein</keyword>
<keyword id="KW-0689">Ribosomal protein</keyword>
<keyword id="KW-0694">RNA-binding</keyword>
<keyword id="KW-0699">rRNA-binding</keyword>
<comment type="function">
    <text evidence="1">With S4 and S12 plays an important role in translational accuracy.</text>
</comment>
<comment type="function">
    <text evidence="1">Located at the back of the 30S subunit body where it stabilizes the conformation of the head with respect to the body.</text>
</comment>
<comment type="subunit">
    <text evidence="1">Part of the 30S ribosomal subunit. Contacts proteins S4 and S8.</text>
</comment>
<comment type="domain">
    <text>The N-terminal domain interacts with the head of the 30S subunit; the C-terminal domain interacts with the body and contacts protein S4. The interaction surface between S4 and S5 is involved in control of translational fidelity.</text>
</comment>
<comment type="similarity">
    <text evidence="1">Belongs to the universal ribosomal protein uS5 family.</text>
</comment>